<sequence length="148" mass="17149">MEFLSGYFLWVKAFHVIAVISWMAALFYLPRLFVYHAENAHKKEFVGVVQIQEKKLYSFIASPAMGFTLITGILMLLIAPEMFKSGGWLHAKLALVVLLLIYHFYCKKCMRELEKDPTGKNARFYRVFNEIPTILMILIVILVVVKPF</sequence>
<keyword id="KW-1003">Cell membrane</keyword>
<keyword id="KW-0349">Heme</keyword>
<keyword id="KW-0408">Iron</keyword>
<keyword id="KW-0472">Membrane</keyword>
<keyword id="KW-0479">Metal-binding</keyword>
<keyword id="KW-0560">Oxidoreductase</keyword>
<keyword id="KW-0812">Transmembrane</keyword>
<keyword id="KW-1133">Transmembrane helix</keyword>
<proteinExistence type="inferred from homology"/>
<name>HEMJ_HELPJ</name>
<gene>
    <name type="ordered locus">jhp_1377</name>
</gene>
<reference key="1">
    <citation type="journal article" date="1999" name="Nature">
        <title>Genomic sequence comparison of two unrelated isolates of the human gastric pathogen Helicobacter pylori.</title>
        <authorList>
            <person name="Alm R.A."/>
            <person name="Ling L.-S.L."/>
            <person name="Moir D.T."/>
            <person name="King B.L."/>
            <person name="Brown E.D."/>
            <person name="Doig P.C."/>
            <person name="Smith D.R."/>
            <person name="Noonan B."/>
            <person name="Guild B.C."/>
            <person name="deJonge B.L."/>
            <person name="Carmel G."/>
            <person name="Tummino P.J."/>
            <person name="Caruso A."/>
            <person name="Uria-Nickelsen M."/>
            <person name="Mills D.M."/>
            <person name="Ives C."/>
            <person name="Gibson R."/>
            <person name="Merberg D."/>
            <person name="Mills S.D."/>
            <person name="Jiang Q."/>
            <person name="Taylor D.E."/>
            <person name="Vovis G.F."/>
            <person name="Trust T.J."/>
        </authorList>
    </citation>
    <scope>NUCLEOTIDE SEQUENCE [LARGE SCALE GENOMIC DNA]</scope>
    <source>
        <strain>J99 / ATCC 700824</strain>
    </source>
</reference>
<organism>
    <name type="scientific">Helicobacter pylori (strain J99 / ATCC 700824)</name>
    <name type="common">Campylobacter pylori J99</name>
    <dbReference type="NCBI Taxonomy" id="85963"/>
    <lineage>
        <taxon>Bacteria</taxon>
        <taxon>Pseudomonadati</taxon>
        <taxon>Campylobacterota</taxon>
        <taxon>Epsilonproteobacteria</taxon>
        <taxon>Campylobacterales</taxon>
        <taxon>Helicobacteraceae</taxon>
        <taxon>Helicobacter</taxon>
    </lineage>
</organism>
<comment type="function">
    <text evidence="1">Catalyzes the oxidation of protoporphyrinogen IX to protoporphyrin IX. Is involved in the biosynthesis of tetrapyrrole molecules like heme. Does not use oxygen or artificial electron acceptors such as menadione or benzoquinone.</text>
</comment>
<comment type="catalytic activity">
    <reaction evidence="1">
        <text>protoporphyrinogen IX + 3 A = protoporphyrin IX + 3 AH2</text>
        <dbReference type="Rhea" id="RHEA:62000"/>
        <dbReference type="ChEBI" id="CHEBI:13193"/>
        <dbReference type="ChEBI" id="CHEBI:17499"/>
        <dbReference type="ChEBI" id="CHEBI:57306"/>
        <dbReference type="ChEBI" id="CHEBI:57307"/>
    </reaction>
</comment>
<comment type="cofactor">
    <cofactor evidence="1">
        <name>heme b</name>
        <dbReference type="ChEBI" id="CHEBI:60344"/>
    </cofactor>
    <text evidence="1">Binds 1 heme b (iron(II)-protoporphyrin IX) group per subunit.</text>
</comment>
<comment type="pathway">
    <text evidence="1">Porphyrin-containing compound metabolism; protoporphyrin-IX biosynthesis; protoporphyrin-IX from protoporphyrinogen-IX: step 1/1.</text>
</comment>
<comment type="subunit">
    <text evidence="1">Homodimer.</text>
</comment>
<comment type="subcellular location">
    <subcellularLocation>
        <location evidence="1">Cell membrane</location>
        <topology evidence="2">Multi-pass membrane protein</topology>
    </subcellularLocation>
</comment>
<comment type="similarity">
    <text evidence="3 4">Belongs to the HemJ family.</text>
</comment>
<accession>Q9ZJD5</accession>
<dbReference type="EC" id="1.3.99.-" evidence="1"/>
<dbReference type="EMBL" id="AE001439">
    <property type="protein sequence ID" value="AAD06948.1"/>
    <property type="molecule type" value="Genomic_DNA"/>
</dbReference>
<dbReference type="PIR" id="D71815">
    <property type="entry name" value="D71815"/>
</dbReference>
<dbReference type="RefSeq" id="WP_000395115.1">
    <property type="nucleotide sequence ID" value="NC_000921.1"/>
</dbReference>
<dbReference type="KEGG" id="hpj:jhp_1377"/>
<dbReference type="PATRIC" id="fig|85963.30.peg.1174"/>
<dbReference type="eggNOG" id="COG1981">
    <property type="taxonomic scope" value="Bacteria"/>
</dbReference>
<dbReference type="UniPathway" id="UPA00251">
    <property type="reaction ID" value="UER00324"/>
</dbReference>
<dbReference type="Proteomes" id="UP000000804">
    <property type="component" value="Chromosome"/>
</dbReference>
<dbReference type="GO" id="GO:0005886">
    <property type="term" value="C:plasma membrane"/>
    <property type="evidence" value="ECO:0007669"/>
    <property type="project" value="UniProtKB-SubCell"/>
</dbReference>
<dbReference type="GO" id="GO:0046872">
    <property type="term" value="F:metal ion binding"/>
    <property type="evidence" value="ECO:0007669"/>
    <property type="project" value="UniProtKB-KW"/>
</dbReference>
<dbReference type="GO" id="GO:0070818">
    <property type="term" value="F:protoporphyrinogen oxidase activity"/>
    <property type="evidence" value="ECO:0007669"/>
    <property type="project" value="UniProtKB-UniRule"/>
</dbReference>
<dbReference type="GO" id="GO:0006782">
    <property type="term" value="P:protoporphyrinogen IX biosynthetic process"/>
    <property type="evidence" value="ECO:0007669"/>
    <property type="project" value="UniProtKB-UniRule"/>
</dbReference>
<dbReference type="HAMAP" id="MF_02239">
    <property type="entry name" value="HemJ"/>
    <property type="match status" value="1"/>
</dbReference>
<dbReference type="InterPro" id="IPR005265">
    <property type="entry name" value="HemJ-like"/>
</dbReference>
<dbReference type="NCBIfam" id="TIGR00701">
    <property type="entry name" value="protoporphyrinogen oxidase HemJ"/>
    <property type="match status" value="1"/>
</dbReference>
<dbReference type="PANTHER" id="PTHR40255:SF1">
    <property type="entry name" value="PROTOPORPHYRINOGEN IX OXIDASE"/>
    <property type="match status" value="1"/>
</dbReference>
<dbReference type="PANTHER" id="PTHR40255">
    <property type="entry name" value="UPF0093 MEMBRANE PROTEIN SLR1790"/>
    <property type="match status" value="1"/>
</dbReference>
<dbReference type="Pfam" id="PF03653">
    <property type="entry name" value="UPF0093"/>
    <property type="match status" value="1"/>
</dbReference>
<dbReference type="PIRSF" id="PIRSF004638">
    <property type="entry name" value="UCP004638"/>
    <property type="match status" value="1"/>
</dbReference>
<protein>
    <recommendedName>
        <fullName evidence="1">Protoporphyrinogen IX oxidase</fullName>
        <shortName evidence="1">PPO</shortName>
        <ecNumber evidence="1">1.3.99.-</ecNumber>
    </recommendedName>
</protein>
<feature type="chain" id="PRO_0000217659" description="Protoporphyrinogen IX oxidase">
    <location>
        <begin position="1"/>
        <end position="148"/>
    </location>
</feature>
<feature type="transmembrane region" description="Helical" evidence="2">
    <location>
        <begin position="7"/>
        <end position="27"/>
    </location>
</feature>
<feature type="transmembrane region" description="Helical" evidence="2">
    <location>
        <begin position="59"/>
        <end position="79"/>
    </location>
</feature>
<feature type="transmembrane region" description="Helical" evidence="2">
    <location>
        <begin position="86"/>
        <end position="106"/>
    </location>
</feature>
<feature type="transmembrane region" description="Helical" evidence="2">
    <location>
        <begin position="128"/>
        <end position="148"/>
    </location>
</feature>
<feature type="binding site" description="axial binding residue" evidence="1">
    <location>
        <position position="15"/>
    </location>
    <ligand>
        <name>heme</name>
        <dbReference type="ChEBI" id="CHEBI:30413"/>
    </ligand>
    <ligandPart>
        <name>Fe</name>
        <dbReference type="ChEBI" id="CHEBI:18248"/>
    </ligandPart>
</feature>
<feature type="binding site" description="axial binding residue" evidence="1">
    <location>
        <position position="92"/>
    </location>
    <ligand>
        <name>heme</name>
        <dbReference type="ChEBI" id="CHEBI:30413"/>
    </ligand>
    <ligandPart>
        <name>Fe</name>
        <dbReference type="ChEBI" id="CHEBI:18248"/>
    </ligandPart>
</feature>
<evidence type="ECO:0000250" key="1">
    <source>
        <dbReference type="UniProtKB" id="P72793"/>
    </source>
</evidence>
<evidence type="ECO:0000255" key="2"/>
<evidence type="ECO:0000255" key="3">
    <source>
        <dbReference type="HAMAP-Rule" id="MF_02239"/>
    </source>
</evidence>
<evidence type="ECO:0000305" key="4"/>